<organism>
    <name type="scientific">Hadronyche infensa</name>
    <name type="common">Fraser island funnel-web spider</name>
    <name type="synonym">Atrax infensus</name>
    <dbReference type="NCBI Taxonomy" id="153481"/>
    <lineage>
        <taxon>Eukaryota</taxon>
        <taxon>Metazoa</taxon>
        <taxon>Ecdysozoa</taxon>
        <taxon>Arthropoda</taxon>
        <taxon>Chelicerata</taxon>
        <taxon>Arachnida</taxon>
        <taxon>Araneae</taxon>
        <taxon>Mygalomorphae</taxon>
        <taxon>Hexathelidae</taxon>
        <taxon>Hadronyche</taxon>
    </lineage>
</organism>
<proteinExistence type="evidence at protein level"/>
<reference key="1">
    <citation type="journal article" date="2020" name="Proc. Natl. Acad. Sci. U.S.A.">
        <title>Structural venomics reveals evolution of a complex venom by duplication and diversification of an ancient peptide-encoding gene.</title>
        <authorList>
            <person name="Pineda S.S."/>
            <person name="Chin Y.K."/>
            <person name="Undheim E.A.B."/>
            <person name="Senff S."/>
            <person name="Mobli M."/>
            <person name="Dauly C."/>
            <person name="Escoubas P."/>
            <person name="Nicholson G.M."/>
            <person name="Kaas Q."/>
            <person name="Guo S."/>
            <person name="Herzig V."/>
            <person name="Mattick J.S."/>
            <person name="King G.F."/>
        </authorList>
    </citation>
    <scope>NUCLEOTIDE SEQUENCE [MRNA]</scope>
    <scope>IDENTIFICATION BY MASS SPECTROMETRY</scope>
    <scope>SUBCELLULAR LOCATION</scope>
    <source>
        <tissue>Venom</tissue>
        <tissue>Venom gland</tissue>
    </source>
</reference>
<reference key="2">
    <citation type="submission" date="2014-07" db="EMBL/GenBank/DDBJ databases">
        <authorList>
            <person name="Zhang J.E."/>
            <person name="Yang H."/>
            <person name="Guo J."/>
            <person name="Deng Z."/>
            <person name="Luo H."/>
            <person name="Luo M."/>
            <person name="Zhao B."/>
        </authorList>
    </citation>
    <scope>NUCLEOTIDE SEQUENCE [MRNA]</scope>
    <source>
        <tissue>Venom gland</tissue>
    </source>
</reference>
<reference key="3">
    <citation type="thesis" date="2012" institute="The University of Queensland" country="Australia">
        <title>Probing the chemical diversity of venom from the Australian Funnel-web spider Hadronyche infensa.</title>
        <authorList>
            <person name="Pineda S.S."/>
        </authorList>
    </citation>
    <scope>NUCLEOTIDE SEQUENCE [MRNA]</scope>
    <source>
        <tissue>Venom gland</tissue>
    </source>
</reference>
<reference evidence="10 11" key="4">
    <citation type="journal article" date="2002" name="Biochemistry">
        <title>Solution structures of the cis- and trans-Pro30 isomers of a novel 38-residue toxin from the venom of Hadronyche infensa sp. that contains a cystine-knot motif within its four disulfide bonds.</title>
        <authorList>
            <person name="Rosengren K.J."/>
            <person name="Wilson D."/>
            <person name="Daly N.L."/>
            <person name="Alewood P.F."/>
            <person name="Craik D.J."/>
        </authorList>
    </citation>
    <scope>PROTEIN SEQUENCE OF 46-83</scope>
    <scope>SUBCELLULAR LOCATION</scope>
    <scope>STRUCTURE BY NMR OF 46-83 OF CIS- AND TRANS-PRO-30 ISOMERS</scope>
    <source>
        <tissue>Venom</tissue>
    </source>
</reference>
<name>T21A_HADIN</name>
<comment type="function">
    <text evidence="1">Inhibits sodium channels (Nav) of insects.</text>
</comment>
<comment type="subcellular location">
    <subcellularLocation>
        <location evidence="3 4">Secreted</location>
    </subcellularLocation>
</comment>
<comment type="tissue specificity">
    <text evidence="8 9">Expressed by the venom gland.</text>
</comment>
<comment type="domain">
    <text evidence="3">The presence of a 'disulfide through disulfide knot' structurally defines this protein as a knottin.</text>
</comment>
<comment type="miscellaneous">
    <text evidence="3">Exists in two forms, due to cis-trans isomerization at Pro-75.</text>
</comment>
<comment type="similarity">
    <text evidence="7">Belongs to the neurotoxin 07 (Beta/delta-agtx) family.</text>
</comment>
<accession>P60272</accession>
<accession>A0A1D0BPQ6</accession>
<accession>A0A1D0C021</accession>
<protein>
    <recommendedName>
        <fullName evidence="7">U2-hexatoxin-Hi1a</fullName>
        <shortName evidence="7">U2-HXTX-Hi1a</shortName>
    </recommendedName>
    <alternativeName>
        <fullName evidence="6">SF3 peptide</fullName>
    </alternativeName>
    <alternativeName>
        <fullName evidence="5">Toxin AcTx-Hi:OB4219</fullName>
    </alternativeName>
</protein>
<feature type="signal peptide" evidence="2">
    <location>
        <begin position="1"/>
        <end position="23"/>
    </location>
</feature>
<feature type="propeptide" id="PRO_0000444422" evidence="3">
    <location>
        <begin position="24"/>
        <end position="45"/>
    </location>
</feature>
<feature type="peptide" id="PRO_0000044966" description="U2-hexatoxin-Hi1a" evidence="3">
    <location>
        <begin position="46"/>
        <end position="83"/>
    </location>
</feature>
<feature type="disulfide bond" evidence="3 10 11">
    <location>
        <begin position="47"/>
        <end position="63"/>
    </location>
</feature>
<feature type="disulfide bond" evidence="3 10 11">
    <location>
        <begin position="54"/>
        <end position="68"/>
    </location>
</feature>
<feature type="disulfide bond" evidence="3 10 11">
    <location>
        <begin position="62"/>
        <end position="78"/>
    </location>
</feature>
<feature type="disulfide bond" evidence="3 10 11">
    <location>
        <begin position="70"/>
        <end position="76"/>
    </location>
</feature>
<feature type="strand" evidence="12">
    <location>
        <begin position="52"/>
        <end position="54"/>
    </location>
</feature>
<feature type="strand" evidence="12">
    <location>
        <begin position="56"/>
        <end position="59"/>
    </location>
</feature>
<feature type="strand" evidence="12">
    <location>
        <begin position="67"/>
        <end position="69"/>
    </location>
</feature>
<feature type="strand" evidence="12">
    <location>
        <begin position="72"/>
        <end position="79"/>
    </location>
</feature>
<keyword id="KW-0002">3D-structure</keyword>
<keyword id="KW-0903">Direct protein sequencing</keyword>
<keyword id="KW-1015">Disulfide bond</keyword>
<keyword id="KW-0872">Ion channel impairing toxin</keyword>
<keyword id="KW-0960">Knottin</keyword>
<keyword id="KW-0528">Neurotoxin</keyword>
<keyword id="KW-0964">Secreted</keyword>
<keyword id="KW-0732">Signal</keyword>
<keyword id="KW-0800">Toxin</keyword>
<keyword id="KW-0738">Voltage-gated sodium channel impairing toxin</keyword>
<sequence>MRNTTFLVLNVMLLVSVALFCAADPEMEKSSFAEILDTGNPEQERKCLAEAADCSPWSGDSCCKPYLCSCIFFYPCSCRPKGW</sequence>
<evidence type="ECO:0000250" key="1"/>
<evidence type="ECO:0000255" key="2"/>
<evidence type="ECO:0000269" key="3">
    <source>
    </source>
</evidence>
<evidence type="ECO:0000269" key="4">
    <source>
    </source>
</evidence>
<evidence type="ECO:0000303" key="5">
    <source>
    </source>
</evidence>
<evidence type="ECO:0000303" key="6">
    <source>
    </source>
</evidence>
<evidence type="ECO:0000305" key="7"/>
<evidence type="ECO:0000305" key="8">
    <source>
    </source>
</evidence>
<evidence type="ECO:0000305" key="9">
    <source>
    </source>
</evidence>
<evidence type="ECO:0000312" key="10">
    <source>
        <dbReference type="PDB" id="1KQH"/>
    </source>
</evidence>
<evidence type="ECO:0000312" key="11">
    <source>
        <dbReference type="PDB" id="1KQI"/>
    </source>
</evidence>
<evidence type="ECO:0007829" key="12">
    <source>
        <dbReference type="PDB" id="1KQH"/>
    </source>
</evidence>
<dbReference type="EMBL" id="HACE01000038">
    <property type="protein sequence ID" value="CDZ18822.1"/>
    <property type="molecule type" value="mRNA"/>
</dbReference>
<dbReference type="EMBL" id="HACE01000101">
    <property type="protein sequence ID" value="CDZ18885.1"/>
    <property type="molecule type" value="mRNA"/>
</dbReference>
<dbReference type="EMBL" id="HACE01000066">
    <property type="protein sequence ID" value="CDZ18850.1"/>
    <property type="molecule type" value="Transcribed_RNA"/>
</dbReference>
<dbReference type="PDB" id="1KQH">
    <property type="method" value="NMR"/>
    <property type="chains" value="A=46-83"/>
</dbReference>
<dbReference type="PDB" id="1KQI">
    <property type="method" value="NMR"/>
    <property type="chains" value="A=46-83"/>
</dbReference>
<dbReference type="PDBsum" id="1KQH"/>
<dbReference type="PDBsum" id="1KQI"/>
<dbReference type="SMR" id="P60272"/>
<dbReference type="ArachnoServer" id="AS000390">
    <property type="toxin name" value="U2-hexatoxin-Hi1a"/>
</dbReference>
<dbReference type="EvolutionaryTrace" id="P60272"/>
<dbReference type="GO" id="GO:0005576">
    <property type="term" value="C:extracellular region"/>
    <property type="evidence" value="ECO:0007669"/>
    <property type="project" value="UniProtKB-SubCell"/>
</dbReference>
<dbReference type="GO" id="GO:0017080">
    <property type="term" value="F:sodium channel regulator activity"/>
    <property type="evidence" value="ECO:0007669"/>
    <property type="project" value="UniProtKB-KW"/>
</dbReference>
<dbReference type="GO" id="GO:0090729">
    <property type="term" value="F:toxin activity"/>
    <property type="evidence" value="ECO:0007669"/>
    <property type="project" value="UniProtKB-KW"/>
</dbReference>
<dbReference type="InterPro" id="IPR016328">
    <property type="entry name" value="Beta/delta-agatoxin_fam"/>
</dbReference>
<dbReference type="SUPFAM" id="SSF57059">
    <property type="entry name" value="omega toxin-like"/>
    <property type="match status" value="1"/>
</dbReference>
<dbReference type="PROSITE" id="PS60015">
    <property type="entry name" value="MU_AGATOXIN"/>
    <property type="match status" value="1"/>
</dbReference>